<proteinExistence type="inferred from homology"/>
<dbReference type="EC" id="3.4.23.36" evidence="1"/>
<dbReference type="EMBL" id="AM263198">
    <property type="protein sequence ID" value="CAK21281.1"/>
    <property type="molecule type" value="Genomic_DNA"/>
</dbReference>
<dbReference type="RefSeq" id="WP_011702633.1">
    <property type="nucleotide sequence ID" value="NC_008555.1"/>
</dbReference>
<dbReference type="SMR" id="A0AJU9"/>
<dbReference type="STRING" id="386043.lwe1863"/>
<dbReference type="GeneID" id="61189764"/>
<dbReference type="KEGG" id="lwe:lwe1863"/>
<dbReference type="eggNOG" id="COG0597">
    <property type="taxonomic scope" value="Bacteria"/>
</dbReference>
<dbReference type="HOGENOM" id="CLU_083252_3_0_9"/>
<dbReference type="OrthoDB" id="9810259at2"/>
<dbReference type="UniPathway" id="UPA00665"/>
<dbReference type="Proteomes" id="UP000000779">
    <property type="component" value="Chromosome"/>
</dbReference>
<dbReference type="GO" id="GO:0005886">
    <property type="term" value="C:plasma membrane"/>
    <property type="evidence" value="ECO:0007669"/>
    <property type="project" value="UniProtKB-SubCell"/>
</dbReference>
<dbReference type="GO" id="GO:0004190">
    <property type="term" value="F:aspartic-type endopeptidase activity"/>
    <property type="evidence" value="ECO:0007669"/>
    <property type="project" value="UniProtKB-UniRule"/>
</dbReference>
<dbReference type="GO" id="GO:0006508">
    <property type="term" value="P:proteolysis"/>
    <property type="evidence" value="ECO:0007669"/>
    <property type="project" value="UniProtKB-KW"/>
</dbReference>
<dbReference type="HAMAP" id="MF_00161">
    <property type="entry name" value="LspA"/>
    <property type="match status" value="1"/>
</dbReference>
<dbReference type="InterPro" id="IPR001872">
    <property type="entry name" value="Peptidase_A8"/>
</dbReference>
<dbReference type="NCBIfam" id="TIGR00077">
    <property type="entry name" value="lspA"/>
    <property type="match status" value="1"/>
</dbReference>
<dbReference type="PANTHER" id="PTHR33695">
    <property type="entry name" value="LIPOPROTEIN SIGNAL PEPTIDASE"/>
    <property type="match status" value="1"/>
</dbReference>
<dbReference type="PANTHER" id="PTHR33695:SF1">
    <property type="entry name" value="LIPOPROTEIN SIGNAL PEPTIDASE"/>
    <property type="match status" value="1"/>
</dbReference>
<dbReference type="Pfam" id="PF01252">
    <property type="entry name" value="Peptidase_A8"/>
    <property type="match status" value="1"/>
</dbReference>
<dbReference type="PRINTS" id="PR00781">
    <property type="entry name" value="LIPOSIGPTASE"/>
</dbReference>
<dbReference type="PROSITE" id="PS00855">
    <property type="entry name" value="SPASE_II"/>
    <property type="match status" value="1"/>
</dbReference>
<name>LSPA_LISW6</name>
<reference key="1">
    <citation type="journal article" date="2006" name="J. Bacteriol.">
        <title>Whole-genome sequence of Listeria welshimeri reveals common steps in genome reduction with Listeria innocua as compared to Listeria monocytogenes.</title>
        <authorList>
            <person name="Hain T."/>
            <person name="Steinweg C."/>
            <person name="Kuenne C.T."/>
            <person name="Billion A."/>
            <person name="Ghai R."/>
            <person name="Chatterjee S.S."/>
            <person name="Domann E."/>
            <person name="Kaerst U."/>
            <person name="Goesmann A."/>
            <person name="Bekel T."/>
            <person name="Bartels D."/>
            <person name="Kaiser O."/>
            <person name="Meyer F."/>
            <person name="Puehler A."/>
            <person name="Weisshaar B."/>
            <person name="Wehland J."/>
            <person name="Liang C."/>
            <person name="Dandekar T."/>
            <person name="Lampidis R."/>
            <person name="Kreft J."/>
            <person name="Goebel W."/>
            <person name="Chakraborty T."/>
        </authorList>
    </citation>
    <scope>NUCLEOTIDE SEQUENCE [LARGE SCALE GENOMIC DNA]</scope>
    <source>
        <strain>ATCC 35897 / DSM 20650 / CCUG 15529 / CIP 8149 / NCTC 11857 / SLCC 5334 / V8</strain>
    </source>
</reference>
<gene>
    <name evidence="1" type="primary">lspA</name>
    <name type="ordered locus">lwe1863</name>
</gene>
<keyword id="KW-0064">Aspartyl protease</keyword>
<keyword id="KW-1003">Cell membrane</keyword>
<keyword id="KW-0378">Hydrolase</keyword>
<keyword id="KW-0472">Membrane</keyword>
<keyword id="KW-0645">Protease</keyword>
<keyword id="KW-0812">Transmembrane</keyword>
<keyword id="KW-1133">Transmembrane helix</keyword>
<comment type="function">
    <text evidence="1">This protein specifically catalyzes the removal of signal peptides from prolipoproteins.</text>
</comment>
<comment type="catalytic activity">
    <reaction evidence="1">
        <text>Release of signal peptides from bacterial membrane prolipoproteins. Hydrolyzes -Xaa-Yaa-Zaa-|-(S,diacylglyceryl)Cys-, in which Xaa is hydrophobic (preferably Leu), and Yaa (Ala or Ser) and Zaa (Gly or Ala) have small, neutral side chains.</text>
        <dbReference type="EC" id="3.4.23.36"/>
    </reaction>
</comment>
<comment type="pathway">
    <text evidence="1">Protein modification; lipoprotein biosynthesis (signal peptide cleavage).</text>
</comment>
<comment type="subcellular location">
    <subcellularLocation>
        <location evidence="1">Cell membrane</location>
        <topology evidence="1">Multi-pass membrane protein</topology>
    </subcellularLocation>
</comment>
<comment type="similarity">
    <text evidence="1">Belongs to the peptidase A8 family.</text>
</comment>
<protein>
    <recommendedName>
        <fullName evidence="1">Lipoprotein signal peptidase</fullName>
        <ecNumber evidence="1">3.4.23.36</ecNumber>
    </recommendedName>
    <alternativeName>
        <fullName evidence="1">Prolipoprotein signal peptidase</fullName>
    </alternativeName>
    <alternativeName>
        <fullName evidence="1">Signal peptidase II</fullName>
        <shortName evidence="1">SPase II</shortName>
    </alternativeName>
</protein>
<sequence>MYYYLITLAVIALDQLTKWFVVQNMEIGQKIEVIPGFLYWTSYRNDGAAWSILEGHMWFFYLITVIVIGIIIYIMQKYAKGKRLFSISLAFILGGAIGNFIDRVLHQEVVDFVQTVWGNYYFPIFNVADASLSVGVVLMLVYVFVDDRKTKGIK</sequence>
<organism>
    <name type="scientific">Listeria welshimeri serovar 6b (strain ATCC 35897 / DSM 20650 / CCUG 15529 / CIP 8149 / NCTC 11857 / SLCC 5334 / V8)</name>
    <dbReference type="NCBI Taxonomy" id="386043"/>
    <lineage>
        <taxon>Bacteria</taxon>
        <taxon>Bacillati</taxon>
        <taxon>Bacillota</taxon>
        <taxon>Bacilli</taxon>
        <taxon>Bacillales</taxon>
        <taxon>Listeriaceae</taxon>
        <taxon>Listeria</taxon>
    </lineage>
</organism>
<feature type="chain" id="PRO_0000289399" description="Lipoprotein signal peptidase">
    <location>
        <begin position="1"/>
        <end position="154"/>
    </location>
</feature>
<feature type="transmembrane region" description="Helical" evidence="1">
    <location>
        <begin position="55"/>
        <end position="75"/>
    </location>
</feature>
<feature type="transmembrane region" description="Helical" evidence="1">
    <location>
        <begin position="84"/>
        <end position="104"/>
    </location>
</feature>
<feature type="transmembrane region" description="Helical" evidence="1">
    <location>
        <begin position="124"/>
        <end position="144"/>
    </location>
</feature>
<feature type="active site" evidence="1">
    <location>
        <position position="111"/>
    </location>
</feature>
<feature type="active site" evidence="1">
    <location>
        <position position="129"/>
    </location>
</feature>
<evidence type="ECO:0000255" key="1">
    <source>
        <dbReference type="HAMAP-Rule" id="MF_00161"/>
    </source>
</evidence>
<accession>A0AJU9</accession>